<sequence length="470" mass="52007">MAATNAVEAGYGGAAENGGCAEGLLGSPMRFSPSSKLKVNHGHFMANINNNAGPGKGGTAAGGTSPTREASYANVSGSGKVIENLHQQVDALTSTNLQLTKQSNQLLEKLEGCNAREAKYLETISSLKHENENLNSMLNRKTRRVKDLDMELVQLRTSHEEATASHNQLKYQLENKFAHETELEQQCQLLQAQYDAVVDAQRRYREHYQKEIEELREALEALKKDNDKFLGEHMARLTRSQLDIDKSMSDYNGKFHRMELSQKEAVIELNEKYDRMRADLDVDGWIVLYKQMRDIAFDYAKQLDLSLPKEFAELHGEDGYYAKMLDEDRQSSPVSTSSTAVEPMSQPSPSMSAQTLSPPPLRVPKNRTPITKRSSFYGNTMPGANISLTSATGLLPGVKRTGSIRSFHGRAPSEGLSDTPTIFTASRNASPMEFPQRSALTSAASANATVRHSSVPRHRRNQSSQVGNNK</sequence>
<organism>
    <name type="scientific">Eremothecium gossypii (strain ATCC 10895 / CBS 109.51 / FGSC 9923 / NRRL Y-1056)</name>
    <name type="common">Yeast</name>
    <name type="synonym">Ashbya gossypii</name>
    <dbReference type="NCBI Taxonomy" id="284811"/>
    <lineage>
        <taxon>Eukaryota</taxon>
        <taxon>Fungi</taxon>
        <taxon>Dikarya</taxon>
        <taxon>Ascomycota</taxon>
        <taxon>Saccharomycotina</taxon>
        <taxon>Saccharomycetes</taxon>
        <taxon>Saccharomycetales</taxon>
        <taxon>Saccharomycetaceae</taxon>
        <taxon>Eremothecium</taxon>
    </lineage>
</organism>
<protein>
    <recommendedName>
        <fullName>SWI5-dependent HO expression protein 3</fullName>
    </recommendedName>
</protein>
<reference key="1">
    <citation type="journal article" date="2004" name="Science">
        <title>The Ashbya gossypii genome as a tool for mapping the ancient Saccharomyces cerevisiae genome.</title>
        <authorList>
            <person name="Dietrich F.S."/>
            <person name="Voegeli S."/>
            <person name="Brachat S."/>
            <person name="Lerch A."/>
            <person name="Gates K."/>
            <person name="Steiner S."/>
            <person name="Mohr C."/>
            <person name="Poehlmann R."/>
            <person name="Luedi P."/>
            <person name="Choi S."/>
            <person name="Wing R.A."/>
            <person name="Flavier A."/>
            <person name="Gaffney T.D."/>
            <person name="Philippsen P."/>
        </authorList>
    </citation>
    <scope>NUCLEOTIDE SEQUENCE [LARGE SCALE GENOMIC DNA]</scope>
    <source>
        <strain>ATCC 10895 / CBS 109.51 / FGSC 9923 / NRRL Y-1056</strain>
    </source>
</reference>
<reference key="2">
    <citation type="journal article" date="2013" name="G3 (Bethesda)">
        <title>Genomes of Ashbya fungi isolated from insects reveal four mating-type loci, numerous translocations, lack of transposons, and distinct gene duplications.</title>
        <authorList>
            <person name="Dietrich F.S."/>
            <person name="Voegeli S."/>
            <person name="Kuo S."/>
            <person name="Philippsen P."/>
        </authorList>
    </citation>
    <scope>GENOME REANNOTATION</scope>
    <source>
        <strain>ATCC 10895 / CBS 109.51 / FGSC 9923 / NRRL Y-1056</strain>
    </source>
</reference>
<accession>Q75EN7</accession>
<gene>
    <name type="primary">SHE3</name>
    <name type="ordered locus">AAR042W</name>
</gene>
<dbReference type="EMBL" id="AE016814">
    <property type="protein sequence ID" value="AAS50407.1"/>
    <property type="molecule type" value="Genomic_DNA"/>
</dbReference>
<dbReference type="RefSeq" id="NP_982583.1">
    <property type="nucleotide sequence ID" value="NM_207936.1"/>
</dbReference>
<dbReference type="SMR" id="Q75EN7"/>
<dbReference type="FunCoup" id="Q75EN7">
    <property type="interactions" value="1483"/>
</dbReference>
<dbReference type="STRING" id="284811.Q75EN7"/>
<dbReference type="EnsemblFungi" id="AAS50407">
    <property type="protein sequence ID" value="AAS50407"/>
    <property type="gene ID" value="AGOS_AAR042W"/>
</dbReference>
<dbReference type="GeneID" id="4618697"/>
<dbReference type="KEGG" id="ago:AGOS_AAR042W"/>
<dbReference type="eggNOG" id="ENOG502QSQX">
    <property type="taxonomic scope" value="Eukaryota"/>
</dbReference>
<dbReference type="HOGENOM" id="CLU_038734_0_0_1"/>
<dbReference type="InParanoid" id="Q75EN7"/>
<dbReference type="OMA" id="HFMANIN"/>
<dbReference type="OrthoDB" id="6088208at2759"/>
<dbReference type="Proteomes" id="UP000000591">
    <property type="component" value="Chromosome I"/>
</dbReference>
<dbReference type="GO" id="GO:0005789">
    <property type="term" value="C:endoplasmic reticulum membrane"/>
    <property type="evidence" value="ECO:0007669"/>
    <property type="project" value="UniProtKB-SubCell"/>
</dbReference>
<dbReference type="GO" id="GO:0003723">
    <property type="term" value="F:RNA binding"/>
    <property type="evidence" value="ECO:0007669"/>
    <property type="project" value="UniProtKB-KW"/>
</dbReference>
<dbReference type="GO" id="GO:0048309">
    <property type="term" value="P:endoplasmic reticulum inheritance"/>
    <property type="evidence" value="ECO:0007669"/>
    <property type="project" value="InterPro"/>
</dbReference>
<dbReference type="GO" id="GO:0051028">
    <property type="term" value="P:mRNA transport"/>
    <property type="evidence" value="ECO:0007669"/>
    <property type="project" value="UniProtKB-KW"/>
</dbReference>
<dbReference type="InterPro" id="IPR031398">
    <property type="entry name" value="She3"/>
</dbReference>
<dbReference type="Pfam" id="PF17078">
    <property type="entry name" value="SHE3"/>
    <property type="match status" value="1"/>
</dbReference>
<evidence type="ECO:0000250" key="1"/>
<evidence type="ECO:0000255" key="2"/>
<evidence type="ECO:0000256" key="3">
    <source>
        <dbReference type="SAM" id="MobiDB-lite"/>
    </source>
</evidence>
<evidence type="ECO:0000305" key="4"/>
<feature type="chain" id="PRO_0000408927" description="SWI5-dependent HO expression protein 3">
    <location>
        <begin position="1"/>
        <end position="470"/>
    </location>
</feature>
<feature type="region of interest" description="Disordered" evidence="3">
    <location>
        <begin position="48"/>
        <end position="70"/>
    </location>
</feature>
<feature type="region of interest" description="Disordered" evidence="3">
    <location>
        <begin position="327"/>
        <end position="378"/>
    </location>
</feature>
<feature type="region of interest" description="Disordered" evidence="3">
    <location>
        <begin position="430"/>
        <end position="470"/>
    </location>
</feature>
<feature type="coiled-coil region" evidence="2">
    <location>
        <begin position="82"/>
        <end position="234"/>
    </location>
</feature>
<feature type="compositionally biased region" description="Polar residues" evidence="3">
    <location>
        <begin position="331"/>
        <end position="340"/>
    </location>
</feature>
<feature type="compositionally biased region" description="Low complexity" evidence="3">
    <location>
        <begin position="343"/>
        <end position="352"/>
    </location>
</feature>
<feature type="compositionally biased region" description="Polar residues" evidence="3">
    <location>
        <begin position="368"/>
        <end position="378"/>
    </location>
</feature>
<feature type="compositionally biased region" description="Low complexity" evidence="3">
    <location>
        <begin position="438"/>
        <end position="449"/>
    </location>
</feature>
<name>SHE3_EREGS</name>
<comment type="function">
    <text evidence="1">RNA-binding protein that binds specific mRNAs including the ASH1 mRNA, coding for a repressor of the HO endonuclease. Part of the mRNA localization machinery that restricts accumulation of certain proteins to the bud and in the daughter cell. Required for the delivery of cortical endoplasmic reticulum into the emerging bud (By similarity).</text>
</comment>
<comment type="subcellular location">
    <subcellularLocation>
        <location evidence="1">Endoplasmic reticulum membrane</location>
        <topology evidence="1">Peripheral membrane protein</topology>
    </subcellularLocation>
</comment>
<comment type="similarity">
    <text evidence="4">Belongs to the SHE3 family.</text>
</comment>
<proteinExistence type="inferred from homology"/>
<keyword id="KW-0175">Coiled coil</keyword>
<keyword id="KW-0256">Endoplasmic reticulum</keyword>
<keyword id="KW-0472">Membrane</keyword>
<keyword id="KW-0509">mRNA transport</keyword>
<keyword id="KW-1185">Reference proteome</keyword>
<keyword id="KW-0694">RNA-binding</keyword>
<keyword id="KW-0813">Transport</keyword>